<gene>
    <name type="ORF">OsI_04666</name>
</gene>
<proteinExistence type="inferred from homology"/>
<keyword id="KW-0150">Chloroplast</keyword>
<keyword id="KW-0275">Fatty acid biosynthesis</keyword>
<keyword id="KW-0276">Fatty acid metabolism</keyword>
<keyword id="KW-0408">Iron</keyword>
<keyword id="KW-0444">Lipid biosynthesis</keyword>
<keyword id="KW-0443">Lipid metabolism</keyword>
<keyword id="KW-0479">Metal-binding</keyword>
<keyword id="KW-0560">Oxidoreductase</keyword>
<keyword id="KW-0934">Plastid</keyword>
<keyword id="KW-1185">Reference proteome</keyword>
<keyword id="KW-0809">Transit peptide</keyword>
<evidence type="ECO:0000250" key="1">
    <source>
        <dbReference type="UniProtKB" id="P22337"/>
    </source>
</evidence>
<evidence type="ECO:0000255" key="2"/>
<evidence type="ECO:0000305" key="3"/>
<comment type="function">
    <text evidence="1">Converts stearoyl-ACP to oleoyl-ACP by introduction of a cis double bond between carbons 9 and 10 of the acyl chain.</text>
</comment>
<comment type="catalytic activity">
    <reaction evidence="1">
        <text>octadecanoyl-[ACP] + 2 reduced [2Fe-2S]-[ferredoxin] + O2 + 2 H(+) = (9Z)-octadecenoyl-[ACP] + 2 oxidized [2Fe-2S]-[ferredoxin] + 2 H2O</text>
        <dbReference type="Rhea" id="RHEA:11776"/>
        <dbReference type="Rhea" id="RHEA-COMP:9656"/>
        <dbReference type="Rhea" id="RHEA-COMP:9924"/>
        <dbReference type="Rhea" id="RHEA-COMP:10000"/>
        <dbReference type="Rhea" id="RHEA-COMP:10001"/>
        <dbReference type="ChEBI" id="CHEBI:15377"/>
        <dbReference type="ChEBI" id="CHEBI:15378"/>
        <dbReference type="ChEBI" id="CHEBI:15379"/>
        <dbReference type="ChEBI" id="CHEBI:33737"/>
        <dbReference type="ChEBI" id="CHEBI:33738"/>
        <dbReference type="ChEBI" id="CHEBI:78495"/>
        <dbReference type="ChEBI" id="CHEBI:78783"/>
        <dbReference type="EC" id="1.14.19.2"/>
    </reaction>
</comment>
<comment type="cofactor">
    <cofactor evidence="1">
        <name>Fe(2+)</name>
        <dbReference type="ChEBI" id="CHEBI:29033"/>
    </cofactor>
    <text evidence="1">Binds 2 Fe(2+) ions per subunit.</text>
</comment>
<comment type="pathway">
    <text>Lipid metabolism; fatty acid metabolism.</text>
</comment>
<comment type="subunit">
    <text evidence="1">Homodimer.</text>
</comment>
<comment type="subcellular location">
    <subcellularLocation>
        <location evidence="3">Plastid</location>
        <location evidence="3">Chloroplast</location>
    </subcellularLocation>
</comment>
<comment type="similarity">
    <text evidence="3">Belongs to the fatty acid desaturase type 2 family.</text>
</comment>
<feature type="transit peptide" description="Chloroplast" evidence="2">
    <location>
        <begin position="1"/>
        <end position="26"/>
    </location>
</feature>
<feature type="chain" id="PRO_0000401427" description="Stearoyl-[acyl-carrier-protein] 9-desaturase 1, chloroplastic">
    <location>
        <begin position="27"/>
        <end position="381"/>
    </location>
</feature>
<feature type="binding site" evidence="1">
    <location>
        <position position="120"/>
    </location>
    <ligand>
        <name>Fe cation</name>
        <dbReference type="ChEBI" id="CHEBI:24875"/>
        <label>1</label>
    </ligand>
</feature>
<feature type="binding site" evidence="1">
    <location>
        <position position="158"/>
    </location>
    <ligand>
        <name>Fe cation</name>
        <dbReference type="ChEBI" id="CHEBI:24875"/>
        <label>1</label>
    </ligand>
</feature>
<feature type="binding site" evidence="1">
    <location>
        <position position="158"/>
    </location>
    <ligand>
        <name>Fe cation</name>
        <dbReference type="ChEBI" id="CHEBI:24875"/>
        <label>2</label>
    </ligand>
</feature>
<feature type="binding site" evidence="1">
    <location>
        <position position="161"/>
    </location>
    <ligand>
        <name>Fe cation</name>
        <dbReference type="ChEBI" id="CHEBI:24875"/>
        <label>1</label>
    </ligand>
</feature>
<feature type="binding site" evidence="1">
    <location>
        <position position="211"/>
    </location>
    <ligand>
        <name>Fe cation</name>
        <dbReference type="ChEBI" id="CHEBI:24875"/>
        <label>2</label>
    </ligand>
</feature>
<feature type="binding site" evidence="1">
    <location>
        <position position="244"/>
    </location>
    <ligand>
        <name>Fe cation</name>
        <dbReference type="ChEBI" id="CHEBI:24875"/>
        <label>1</label>
    </ligand>
</feature>
<feature type="binding site" evidence="1">
    <location>
        <position position="244"/>
    </location>
    <ligand>
        <name>Fe cation</name>
        <dbReference type="ChEBI" id="CHEBI:24875"/>
        <label>2</label>
    </ligand>
</feature>
<feature type="binding site" evidence="1">
    <location>
        <position position="247"/>
    </location>
    <ligand>
        <name>Fe cation</name>
        <dbReference type="ChEBI" id="CHEBI:24875"/>
        <label>2</label>
    </ligand>
</feature>
<protein>
    <recommendedName>
        <fullName>Stearoyl-[acyl-carrier-protein] 9-desaturase 1, chloroplastic</fullName>
        <shortName>Stearoyl-ACP desaturase 1</shortName>
        <ecNumber evidence="1">1.14.19.2</ecNumber>
    </recommendedName>
    <alternativeName>
        <fullName>Acyl-[acyl-carrier-protein] desaturase 1</fullName>
    </alternativeName>
</protein>
<organism>
    <name type="scientific">Oryza sativa subsp. indica</name>
    <name type="common">Rice</name>
    <dbReference type="NCBI Taxonomy" id="39946"/>
    <lineage>
        <taxon>Eukaryota</taxon>
        <taxon>Viridiplantae</taxon>
        <taxon>Streptophyta</taxon>
        <taxon>Embryophyta</taxon>
        <taxon>Tracheophyta</taxon>
        <taxon>Spermatophyta</taxon>
        <taxon>Magnoliopsida</taxon>
        <taxon>Liliopsida</taxon>
        <taxon>Poales</taxon>
        <taxon>Poaceae</taxon>
        <taxon>BOP clade</taxon>
        <taxon>Oryzoideae</taxon>
        <taxon>Oryzeae</taxon>
        <taxon>Oryzinae</taxon>
        <taxon>Oryza</taxon>
        <taxon>Oryza sativa</taxon>
    </lineage>
</organism>
<dbReference type="EC" id="1.14.19.2" evidence="1"/>
<dbReference type="EMBL" id="CM000126">
    <property type="protein sequence ID" value="EEC71900.1"/>
    <property type="molecule type" value="Genomic_DNA"/>
</dbReference>
<dbReference type="SMR" id="B8A7A3"/>
<dbReference type="STRING" id="39946.B8A7A3"/>
<dbReference type="EnsemblPlants" id="BGIOSGA004922-TA">
    <property type="protein sequence ID" value="BGIOSGA004922-PA"/>
    <property type="gene ID" value="BGIOSGA004922"/>
</dbReference>
<dbReference type="EnsemblPlants" id="OsGoSa_01g0041590.01">
    <property type="protein sequence ID" value="OsGoSa_01g0041590.01"/>
    <property type="gene ID" value="OsGoSa_01g0041590"/>
</dbReference>
<dbReference type="EnsemblPlants" id="OsIR64_01g0041030.01">
    <property type="protein sequence ID" value="OsIR64_01g0041030.01"/>
    <property type="gene ID" value="OsIR64_01g0041030"/>
</dbReference>
<dbReference type="EnsemblPlants" id="OsKYG_01g0041340.01">
    <property type="protein sequence ID" value="OsKYG_01g0041340.01"/>
    <property type="gene ID" value="OsKYG_01g0041340"/>
</dbReference>
<dbReference type="EnsemblPlants" id="OsLaMu_01g0041410.01">
    <property type="protein sequence ID" value="OsLaMu_01g0041410.01"/>
    <property type="gene ID" value="OsLaMu_01g0041410"/>
</dbReference>
<dbReference type="EnsemblPlants" id="OsLima_01g0041400.01">
    <property type="protein sequence ID" value="OsLima_01g0041400.01"/>
    <property type="gene ID" value="OsLima_01g0041400"/>
</dbReference>
<dbReference type="EnsemblPlants" id="OsMH63_01G042230_01">
    <property type="protein sequence ID" value="OsMH63_01G042230_01"/>
    <property type="gene ID" value="OsMH63_01G042230"/>
</dbReference>
<dbReference type="EnsemblPlants" id="OsPr106_01g0041390.01">
    <property type="protein sequence ID" value="OsPr106_01g0041390.01"/>
    <property type="gene ID" value="OsPr106_01g0041390"/>
</dbReference>
<dbReference type="EnsemblPlants" id="OsZS97_01G041560_01">
    <property type="protein sequence ID" value="OsZS97_01G041560_01"/>
    <property type="gene ID" value="OsZS97_01G041560"/>
</dbReference>
<dbReference type="Gramene" id="BGIOSGA004922-TA">
    <property type="protein sequence ID" value="BGIOSGA004922-PA"/>
    <property type="gene ID" value="BGIOSGA004922"/>
</dbReference>
<dbReference type="Gramene" id="OsGoSa_01g0041590.01">
    <property type="protein sequence ID" value="OsGoSa_01g0041590.01"/>
    <property type="gene ID" value="OsGoSa_01g0041590"/>
</dbReference>
<dbReference type="Gramene" id="OsIR64_01g0041030.01">
    <property type="protein sequence ID" value="OsIR64_01g0041030.01"/>
    <property type="gene ID" value="OsIR64_01g0041030"/>
</dbReference>
<dbReference type="Gramene" id="OsKYG_01g0041340.01">
    <property type="protein sequence ID" value="OsKYG_01g0041340.01"/>
    <property type="gene ID" value="OsKYG_01g0041340"/>
</dbReference>
<dbReference type="Gramene" id="OsLaMu_01g0041410.01">
    <property type="protein sequence ID" value="OsLaMu_01g0041410.01"/>
    <property type="gene ID" value="OsLaMu_01g0041410"/>
</dbReference>
<dbReference type="Gramene" id="OsLima_01g0041400.01">
    <property type="protein sequence ID" value="OsLima_01g0041400.01"/>
    <property type="gene ID" value="OsLima_01g0041400"/>
</dbReference>
<dbReference type="Gramene" id="OsMH63_01G042230_01">
    <property type="protein sequence ID" value="OsMH63_01G042230_01"/>
    <property type="gene ID" value="OsMH63_01G042230"/>
</dbReference>
<dbReference type="Gramene" id="OsPr106_01g0041390.01">
    <property type="protein sequence ID" value="OsPr106_01g0041390.01"/>
    <property type="gene ID" value="OsPr106_01g0041390"/>
</dbReference>
<dbReference type="Gramene" id="OsZS97_01G041560_01">
    <property type="protein sequence ID" value="OsZS97_01G041560_01"/>
    <property type="gene ID" value="OsZS97_01G041560"/>
</dbReference>
<dbReference type="HOGENOM" id="CLU_034505_1_0_1"/>
<dbReference type="OMA" id="KPVDQCW"/>
<dbReference type="OrthoDB" id="1924153at2759"/>
<dbReference type="UniPathway" id="UPA00199"/>
<dbReference type="Proteomes" id="UP000007015">
    <property type="component" value="Chromosome 1"/>
</dbReference>
<dbReference type="GO" id="GO:0009570">
    <property type="term" value="C:chloroplast stroma"/>
    <property type="evidence" value="ECO:0007669"/>
    <property type="project" value="TreeGrafter"/>
</dbReference>
<dbReference type="GO" id="GO:0046872">
    <property type="term" value="F:metal ion binding"/>
    <property type="evidence" value="ECO:0007669"/>
    <property type="project" value="UniProtKB-KW"/>
</dbReference>
<dbReference type="GO" id="GO:0045300">
    <property type="term" value="F:stearoyl-[ACP] desaturase activity"/>
    <property type="evidence" value="ECO:0007669"/>
    <property type="project" value="UniProtKB-EC"/>
</dbReference>
<dbReference type="GO" id="GO:0006633">
    <property type="term" value="P:fatty acid biosynthetic process"/>
    <property type="evidence" value="ECO:0007669"/>
    <property type="project" value="UniProtKB-KW"/>
</dbReference>
<dbReference type="CDD" id="cd01050">
    <property type="entry name" value="Acyl_ACP_Desat"/>
    <property type="match status" value="1"/>
</dbReference>
<dbReference type="FunFam" id="1.10.620.20:FF:000002">
    <property type="entry name" value="Stearoyl-[acyl-carrier-protein] 9-desaturase, chloroplastic"/>
    <property type="match status" value="1"/>
</dbReference>
<dbReference type="Gene3D" id="1.10.620.20">
    <property type="entry name" value="Ribonucleotide Reductase, subunit A"/>
    <property type="match status" value="1"/>
</dbReference>
<dbReference type="InterPro" id="IPR005067">
    <property type="entry name" value="Fatty_acid_desaturase-2"/>
</dbReference>
<dbReference type="InterPro" id="IPR009078">
    <property type="entry name" value="Ferritin-like_SF"/>
</dbReference>
<dbReference type="InterPro" id="IPR012348">
    <property type="entry name" value="RNR-like"/>
</dbReference>
<dbReference type="PANTHER" id="PTHR31155">
    <property type="entry name" value="ACYL- ACYL-CARRIER-PROTEIN DESATURASE-RELATED"/>
    <property type="match status" value="1"/>
</dbReference>
<dbReference type="PANTHER" id="PTHR31155:SF31">
    <property type="entry name" value="STEAROYL-[ACYL-CARRIER-PROTEIN] 9-DESATURASE 6, CHLOROPLASTIC"/>
    <property type="match status" value="1"/>
</dbReference>
<dbReference type="Pfam" id="PF03405">
    <property type="entry name" value="FA_desaturase_2"/>
    <property type="match status" value="1"/>
</dbReference>
<dbReference type="PIRSF" id="PIRSF000346">
    <property type="entry name" value="Dlt9_acylACP_des"/>
    <property type="match status" value="1"/>
</dbReference>
<dbReference type="SUPFAM" id="SSF47240">
    <property type="entry name" value="Ferritin-like"/>
    <property type="match status" value="1"/>
</dbReference>
<accession>B8A7A3</accession>
<name>STAD1_ORYSI</name>
<sequence length="381" mass="42943">MQVVGTVRVSGCGAVVAPSRRQCRVSAAVLTAAETATATRRRVTHSMPPEKAEVFRSLEGWARSSLLPLLKPVEECWQPTDFLPDSSSEMFEHQVHELRARAAGLPDEYFVVLVGDMITEEALPTYQTMINTLDGVRDETGASACPWAVWTRTWTAEENRHGDILGKYMYLSGRVDMRMVEKTVQYLIGSGMDPGTENNPYLGFVYTSFQERATAVSHGNTARLARAHGDDVLARTCGTIAADEKRHETAYGRIVEQLLRLDPDGAMLAIADMMHKRITMPAHLMHDGRDMNLFDHFAAVAQRLNVYTARDYADIVEFLVKRWKLETLETGLSGEGRRARDFVCGLAKRMRRAAERAEDRAKKDEQRKVKFSWIYDREVIV</sequence>
<reference key="1">
    <citation type="journal article" date="2005" name="PLoS Biol.">
        <title>The genomes of Oryza sativa: a history of duplications.</title>
        <authorList>
            <person name="Yu J."/>
            <person name="Wang J."/>
            <person name="Lin W."/>
            <person name="Li S."/>
            <person name="Li H."/>
            <person name="Zhou J."/>
            <person name="Ni P."/>
            <person name="Dong W."/>
            <person name="Hu S."/>
            <person name="Zeng C."/>
            <person name="Zhang J."/>
            <person name="Zhang Y."/>
            <person name="Li R."/>
            <person name="Xu Z."/>
            <person name="Li S."/>
            <person name="Li X."/>
            <person name="Zheng H."/>
            <person name="Cong L."/>
            <person name="Lin L."/>
            <person name="Yin J."/>
            <person name="Geng J."/>
            <person name="Li G."/>
            <person name="Shi J."/>
            <person name="Liu J."/>
            <person name="Lv H."/>
            <person name="Li J."/>
            <person name="Wang J."/>
            <person name="Deng Y."/>
            <person name="Ran L."/>
            <person name="Shi X."/>
            <person name="Wang X."/>
            <person name="Wu Q."/>
            <person name="Li C."/>
            <person name="Ren X."/>
            <person name="Wang J."/>
            <person name="Wang X."/>
            <person name="Li D."/>
            <person name="Liu D."/>
            <person name="Zhang X."/>
            <person name="Ji Z."/>
            <person name="Zhao W."/>
            <person name="Sun Y."/>
            <person name="Zhang Z."/>
            <person name="Bao J."/>
            <person name="Han Y."/>
            <person name="Dong L."/>
            <person name="Ji J."/>
            <person name="Chen P."/>
            <person name="Wu S."/>
            <person name="Liu J."/>
            <person name="Xiao Y."/>
            <person name="Bu D."/>
            <person name="Tan J."/>
            <person name="Yang L."/>
            <person name="Ye C."/>
            <person name="Zhang J."/>
            <person name="Xu J."/>
            <person name="Zhou Y."/>
            <person name="Yu Y."/>
            <person name="Zhang B."/>
            <person name="Zhuang S."/>
            <person name="Wei H."/>
            <person name="Liu B."/>
            <person name="Lei M."/>
            <person name="Yu H."/>
            <person name="Li Y."/>
            <person name="Xu H."/>
            <person name="Wei S."/>
            <person name="He X."/>
            <person name="Fang L."/>
            <person name="Zhang Z."/>
            <person name="Zhang Y."/>
            <person name="Huang X."/>
            <person name="Su Z."/>
            <person name="Tong W."/>
            <person name="Li J."/>
            <person name="Tong Z."/>
            <person name="Li S."/>
            <person name="Ye J."/>
            <person name="Wang L."/>
            <person name="Fang L."/>
            <person name="Lei T."/>
            <person name="Chen C.-S."/>
            <person name="Chen H.-C."/>
            <person name="Xu Z."/>
            <person name="Li H."/>
            <person name="Huang H."/>
            <person name="Zhang F."/>
            <person name="Xu H."/>
            <person name="Li N."/>
            <person name="Zhao C."/>
            <person name="Li S."/>
            <person name="Dong L."/>
            <person name="Huang Y."/>
            <person name="Li L."/>
            <person name="Xi Y."/>
            <person name="Qi Q."/>
            <person name="Li W."/>
            <person name="Zhang B."/>
            <person name="Hu W."/>
            <person name="Zhang Y."/>
            <person name="Tian X."/>
            <person name="Jiao Y."/>
            <person name="Liang X."/>
            <person name="Jin J."/>
            <person name="Gao L."/>
            <person name="Zheng W."/>
            <person name="Hao B."/>
            <person name="Liu S.-M."/>
            <person name="Wang W."/>
            <person name="Yuan L."/>
            <person name="Cao M."/>
            <person name="McDermott J."/>
            <person name="Samudrala R."/>
            <person name="Wang J."/>
            <person name="Wong G.K.-S."/>
            <person name="Yang H."/>
        </authorList>
    </citation>
    <scope>NUCLEOTIDE SEQUENCE [LARGE SCALE GENOMIC DNA]</scope>
    <source>
        <strain>cv. 93-11</strain>
    </source>
</reference>